<evidence type="ECO:0000250" key="1"/>
<evidence type="ECO:0000250" key="2">
    <source>
        <dbReference type="UniProtKB" id="P0AAA9"/>
    </source>
</evidence>
<evidence type="ECO:0000256" key="3">
    <source>
        <dbReference type="SAM" id="MobiDB-lite"/>
    </source>
</evidence>
<evidence type="ECO:0000305" key="4"/>
<proteinExistence type="inferred from homology"/>
<gene>
    <name type="primary">zraP</name>
    <name type="ordered locus">YPTB1203</name>
</gene>
<dbReference type="EMBL" id="BX936398">
    <property type="protein sequence ID" value="CAH20443.1"/>
    <property type="molecule type" value="Genomic_DNA"/>
</dbReference>
<dbReference type="RefSeq" id="WP_011191968.1">
    <property type="nucleotide sequence ID" value="NC_006155.1"/>
</dbReference>
<dbReference type="SMR" id="Q66D46"/>
<dbReference type="KEGG" id="ypo:BZ17_1324"/>
<dbReference type="KEGG" id="yps:YPTB1203"/>
<dbReference type="PATRIC" id="fig|273123.14.peg.1414"/>
<dbReference type="Proteomes" id="UP000001011">
    <property type="component" value="Chromosome"/>
</dbReference>
<dbReference type="GO" id="GO:0042597">
    <property type="term" value="C:periplasmic space"/>
    <property type="evidence" value="ECO:0007669"/>
    <property type="project" value="UniProtKB-SubCell"/>
</dbReference>
<dbReference type="Gene3D" id="1.20.120.1490">
    <property type="match status" value="1"/>
</dbReference>
<dbReference type="InterPro" id="IPR025961">
    <property type="entry name" value="Metal_resist"/>
</dbReference>
<dbReference type="Pfam" id="PF13801">
    <property type="entry name" value="Metal_resist"/>
    <property type="match status" value="1"/>
</dbReference>
<sequence>MNLNKTAIVTLLSLATLIGFGGSAIAQNAMGTHMNGDGTDMSHSQGKYSGKNSMANLTTEQQAIRQQVLNEFQASTADMRQQLTSKNYEYKALLTSKPVDEQKVLAVSKEIQTLRDSLYQRRVSMDTQLAKAGIAMTGNHGSRGGNHMGMAGGRGCR</sequence>
<feature type="signal peptide" evidence="1">
    <location>
        <begin position="1"/>
        <end position="26"/>
    </location>
</feature>
<feature type="chain" id="PRO_0000041886" description="Signaling pathway modulator ZraP">
    <location>
        <begin position="27"/>
        <end position="157"/>
    </location>
</feature>
<feature type="region of interest" description="Disordered" evidence="3">
    <location>
        <begin position="136"/>
        <end position="157"/>
    </location>
</feature>
<feature type="compositionally biased region" description="Gly residues" evidence="3">
    <location>
        <begin position="141"/>
        <end position="157"/>
    </location>
</feature>
<reference key="1">
    <citation type="journal article" date="2004" name="Proc. Natl. Acad. Sci. U.S.A.">
        <title>Insights into the evolution of Yersinia pestis through whole-genome comparison with Yersinia pseudotuberculosis.</title>
        <authorList>
            <person name="Chain P.S.G."/>
            <person name="Carniel E."/>
            <person name="Larimer F.W."/>
            <person name="Lamerdin J."/>
            <person name="Stoutland P.O."/>
            <person name="Regala W.M."/>
            <person name="Georgescu A.M."/>
            <person name="Vergez L.M."/>
            <person name="Land M.L."/>
            <person name="Motin V.L."/>
            <person name="Brubaker R.R."/>
            <person name="Fowler J."/>
            <person name="Hinnebusch J."/>
            <person name="Marceau M."/>
            <person name="Medigue C."/>
            <person name="Simonet M."/>
            <person name="Chenal-Francisque V."/>
            <person name="Souza B."/>
            <person name="Dacheux D."/>
            <person name="Elliott J.M."/>
            <person name="Derbise A."/>
            <person name="Hauser L.J."/>
            <person name="Garcia E."/>
        </authorList>
    </citation>
    <scope>NUCLEOTIDE SEQUENCE [LARGE SCALE GENOMIC DNA]</scope>
    <source>
        <strain>IP32953</strain>
    </source>
</reference>
<comment type="function">
    <text evidence="2">Part of the Zra signaling pathway, an envelope stress response (ESR) system composed of the periplasmic accessory protein ZraP, the histidine kinase ZraS and the transcriptional regulator ZraR. The ZraPSR system contributes to antibiotic resistance and is important for membrane integrity in the presence of membrane-targeting biocides. ZraP acts as a modulator which has both a regulatory and a chaperone function. The zinc-bound form of ZraP modulates the response of the ZraPSR system by inhibiting the expression of the zra genes, probably by interacting with ZraS.</text>
</comment>
<comment type="subcellular location">
    <subcellularLocation>
        <location evidence="2">Periplasm</location>
    </subcellularLocation>
</comment>
<comment type="similarity">
    <text evidence="4">Belongs to the ZraP family.</text>
</comment>
<name>ZRAP_YERPS</name>
<accession>Q66D46</accession>
<protein>
    <recommendedName>
        <fullName evidence="2">Signaling pathway modulator ZraP</fullName>
    </recommendedName>
    <alternativeName>
        <fullName>Zinc resistance-associated protein</fullName>
    </alternativeName>
</protein>
<organism>
    <name type="scientific">Yersinia pseudotuberculosis serotype I (strain IP32953)</name>
    <dbReference type="NCBI Taxonomy" id="273123"/>
    <lineage>
        <taxon>Bacteria</taxon>
        <taxon>Pseudomonadati</taxon>
        <taxon>Pseudomonadota</taxon>
        <taxon>Gammaproteobacteria</taxon>
        <taxon>Enterobacterales</taxon>
        <taxon>Yersiniaceae</taxon>
        <taxon>Yersinia</taxon>
    </lineage>
</organism>
<keyword id="KW-0574">Periplasm</keyword>
<keyword id="KW-0732">Signal</keyword>
<keyword id="KW-0346">Stress response</keyword>
<keyword id="KW-0862">Zinc</keyword>